<name>CEP1_CAEEL</name>
<comment type="function">
    <text evidence="2 3 4 5 6 7 8 9 10 11 12 13 15 16 17 18 19 20 21">Transcriptional activator that binds the same DNA consensus sequence as p53 (PubMed:11696333, PubMed:15242600, PubMed:28560849). Has a role in normal development to ensure proper meiotic chromosome segregation (PubMed:11557844, PubMed:12445383). Promotes apoptosis under conditions of cellular and genotoxic stress in response to DNA damage, hypoxia, or starvation (PubMed:11557844, PubMed:11696333, PubMed:12445383, PubMed:15273685, PubMed:17186023, PubMed:18836529, PubMed:21901106). Regulates germline apoptosis in response to DNA damage (PubMed:11696333, PubMed:15273685, PubMed:15707894, PubMed:16319925, PubMed:17186023, PubMed:17276923, PubMed:17347667, PubMed:19015549, PubMed:26598553). Its pro-apoptotic activity is inhibited when bound to ape-1 in vitro (PubMed:12524540). Plays a role in cell cycle arrest in the germline in response to DNA damage by UV-C light (PubMed:17347667). However, not required for survival in response to DNA damage induced by UV-C light, indicating that it is unlikely to be involved in DNA repair (PubMed:17347667). Required for induction of ced-13 in response to DNA damage (PubMed:15605074). Regulates DNA damage-induced apoptosis by inducing transcription of the programmed cell death activator egl-1 (PubMed:12445383, PubMed:19521535). Regulates germline proliferation by activating phg-1 (PubMed:17186023). Modulates lifespan (PubMed:17895432, PubMed:18836529, PubMed:28560849).</text>
</comment>
<comment type="cofactor">
    <cofactor evidence="14">
        <name>Zn(2+)</name>
        <dbReference type="ChEBI" id="CHEBI:29105"/>
    </cofactor>
    <text evidence="14">Binds 1 zinc ion per subunit.</text>
</comment>
<comment type="subunit">
    <text evidence="5 9 19 23">Homodimer (PubMed:15707894). Interacts (via C-terminus domain) with prmt-5; not methylated by prmt-5 (PubMed:19521535). Interacts with cbp-1 (via HAT domain); cep-1 transcriptional activity may be inhibited by interaction with methylated cbp-1 (PubMed:19521535). Component of a complex that contains prmt-5 and cbp-1 (PubMed:19521535). Interacts with ape-1; the interaction inhibits pro-apoptotic activity of cep-1 (PubMed:12524540).</text>
</comment>
<comment type="subcellular location">
    <subcellularLocation>
        <location evidence="2">Nucleus</location>
    </subcellularLocation>
</comment>
<comment type="alternative products">
    <event type="alternative splicing"/>
    <isoform>
        <id>Q20646-1</id>
        <name evidence="22 27">a</name>
        <sequence type="displayed"/>
    </isoform>
    <isoform>
        <id>Q20646-2</id>
        <name evidence="28">b</name>
        <sequence type="described" ref="VSP_053085"/>
    </isoform>
</comment>
<comment type="tissue specificity">
    <text evidence="2">Expressed in pharyngeal muscle and neurons.</text>
</comment>
<comment type="developmental stage">
    <text evidence="2 9 20">Expressed in embryos and larvae (PubMed:11557844, PubMed:15707894). Expressed in the distal zone of mitotic germline and in late pachytene, diplotene and diakinesis stages of meiotic germline (PubMed:11557844, PubMed:15707894, PubMed:21901106).</text>
</comment>
<comment type="induction">
    <text evidence="12">By DNA damage.</text>
</comment>
<comment type="PTM">
    <text evidence="12">Phosphorylated in response to IR-induced DNA damage which is thought to be mediated by akt-1.</text>
</comment>
<comment type="disruption phenotype">
    <text evidence="2 3 5 7 15 18 19 21">Reduced numbers of germ cell corpses, hypersensitive to the lethal effects of hypoxia, increase in production of males (Him phenotype), decreased lifespan and in extreme cases embryonic lethality (PubMed:11557844, PubMed:11696333, PubMed:15273685, PubMed:17895432, PubMed:19015549, PubMed:26598553). In cep-1 and prmt-5 double mutants, germline cell death and up-regulation of egl-1 mRNA induced by gamma irradiation is prevented (PubMed:19521535). Double RNAi-mediated knockdown together with ape-1 abrogates the increased number of apoptotic germ cells in the ape-1 knockdown model (PubMed:12524540).</text>
</comment>
<comment type="similarity">
    <text evidence="24">Belongs to the p53 family.</text>
</comment>
<evidence type="ECO:0000255" key="1"/>
<evidence type="ECO:0000269" key="2">
    <source>
    </source>
</evidence>
<evidence type="ECO:0000269" key="3">
    <source>
    </source>
</evidence>
<evidence type="ECO:0000269" key="4">
    <source>
    </source>
</evidence>
<evidence type="ECO:0000269" key="5">
    <source>
    </source>
</evidence>
<evidence type="ECO:0000269" key="6">
    <source>
    </source>
</evidence>
<evidence type="ECO:0000269" key="7">
    <source>
    </source>
</evidence>
<evidence type="ECO:0000269" key="8">
    <source>
    </source>
</evidence>
<evidence type="ECO:0000269" key="9">
    <source>
    </source>
</evidence>
<evidence type="ECO:0000269" key="10">
    <source>
    </source>
</evidence>
<evidence type="ECO:0000269" key="11">
    <source>
    </source>
</evidence>
<evidence type="ECO:0000269" key="12">
    <source>
    </source>
</evidence>
<evidence type="ECO:0000269" key="13">
    <source>
    </source>
</evidence>
<evidence type="ECO:0000269" key="14">
    <source>
    </source>
</evidence>
<evidence type="ECO:0000269" key="15">
    <source>
    </source>
</evidence>
<evidence type="ECO:0000269" key="16">
    <source>
    </source>
</evidence>
<evidence type="ECO:0000269" key="17">
    <source>
    </source>
</evidence>
<evidence type="ECO:0000269" key="18">
    <source>
    </source>
</evidence>
<evidence type="ECO:0000269" key="19">
    <source>
    </source>
</evidence>
<evidence type="ECO:0000269" key="20">
    <source>
    </source>
</evidence>
<evidence type="ECO:0000269" key="21">
    <source>
    </source>
</evidence>
<evidence type="ECO:0000303" key="22">
    <source>
    </source>
</evidence>
<evidence type="ECO:0000303" key="23">
    <source>
    </source>
</evidence>
<evidence type="ECO:0000305" key="24"/>
<evidence type="ECO:0000312" key="25">
    <source>
        <dbReference type="EMBL" id="AAL28139.1"/>
    </source>
</evidence>
<evidence type="ECO:0000312" key="26">
    <source>
        <dbReference type="EMBL" id="CAA99857.2"/>
    </source>
</evidence>
<evidence type="ECO:0000312" key="27">
    <source>
        <dbReference type="WormBase" id="F52B5.5a"/>
    </source>
</evidence>
<evidence type="ECO:0000312" key="28">
    <source>
        <dbReference type="WormBase" id="F52B5.5b"/>
    </source>
</evidence>
<evidence type="ECO:0007829" key="29">
    <source>
        <dbReference type="PDB" id="1T4W"/>
    </source>
</evidence>
<evidence type="ECO:0007829" key="30">
    <source>
        <dbReference type="PDB" id="2RP5"/>
    </source>
</evidence>
<feature type="chain" id="PRO_0000371248" description="Transcription factor cep-1">
    <location>
        <begin position="1"/>
        <end position="644"/>
    </location>
</feature>
<feature type="DNA-binding region" evidence="1">
    <location>
        <begin position="223"/>
        <end position="418"/>
    </location>
</feature>
<feature type="region of interest" description="Required for tertiary structure stability of the protein" evidence="14">
    <location>
        <begin position="528"/>
        <end position="555"/>
    </location>
</feature>
<feature type="binding site" evidence="14">
    <location>
        <position position="307"/>
    </location>
    <ligand>
        <name>Zn(2+)</name>
        <dbReference type="ChEBI" id="CHEBI:29105"/>
    </ligand>
</feature>
<feature type="binding site" evidence="14">
    <location>
        <position position="310"/>
    </location>
    <ligand>
        <name>Zn(2+)</name>
        <dbReference type="ChEBI" id="CHEBI:29105"/>
    </ligand>
</feature>
<feature type="binding site" evidence="14">
    <location>
        <position position="361"/>
    </location>
    <ligand>
        <name>Zn(2+)</name>
        <dbReference type="ChEBI" id="CHEBI:29105"/>
    </ligand>
</feature>
<feature type="binding site" evidence="14">
    <location>
        <position position="365"/>
    </location>
    <ligand>
        <name>Zn(2+)</name>
        <dbReference type="ChEBI" id="CHEBI:29105"/>
    </ligand>
</feature>
<feature type="splice variant" id="VSP_053085" description="In isoform b." evidence="24">
    <location>
        <begin position="1"/>
        <end position="447"/>
    </location>
</feature>
<feature type="mutagenesis site" description="Disrupts homodimer formation." evidence="14">
    <original>K</original>
    <variation>L</variation>
    <location>
        <position position="544"/>
    </location>
</feature>
<feature type="mutagenesis site" description="Disrupts homodimer formation." evidence="14">
    <original>R</original>
    <variation>L</variation>
    <location>
        <position position="551"/>
    </location>
</feature>
<feature type="mutagenesis site" description="Disrupts homodimer formation." evidence="14">
    <original>E</original>
    <variation>L</variation>
    <location>
        <position position="552"/>
    </location>
</feature>
<feature type="strand" evidence="29">
    <location>
        <begin position="225"/>
        <end position="230"/>
    </location>
</feature>
<feature type="helix" evidence="29">
    <location>
        <begin position="232"/>
        <end position="235"/>
    </location>
</feature>
<feature type="strand" evidence="29">
    <location>
        <begin position="239"/>
        <end position="245"/>
    </location>
</feature>
<feature type="strand" evidence="29">
    <location>
        <begin position="251"/>
        <end position="255"/>
    </location>
</feature>
<feature type="strand" evidence="29">
    <location>
        <begin position="261"/>
        <end position="268"/>
    </location>
</feature>
<feature type="turn" evidence="29">
    <location>
        <begin position="271"/>
        <end position="275"/>
    </location>
</feature>
<feature type="strand" evidence="29">
    <location>
        <begin position="279"/>
        <end position="287"/>
    </location>
</feature>
<feature type="strand" evidence="29">
    <location>
        <begin position="289"/>
        <end position="291"/>
    </location>
</feature>
<feature type="helix" evidence="29">
    <location>
        <begin position="293"/>
        <end position="296"/>
    </location>
</feature>
<feature type="helix" evidence="29">
    <location>
        <begin position="308"/>
        <end position="312"/>
    </location>
</feature>
<feature type="strand" evidence="29">
    <location>
        <begin position="316"/>
        <end position="318"/>
    </location>
</feature>
<feature type="strand" evidence="29">
    <location>
        <begin position="322"/>
        <end position="327"/>
    </location>
</feature>
<feature type="strand" evidence="29">
    <location>
        <begin position="329"/>
        <end position="335"/>
    </location>
</feature>
<feature type="strand" evidence="29">
    <location>
        <begin position="339"/>
        <end position="345"/>
    </location>
</feature>
<feature type="strand" evidence="29">
    <location>
        <begin position="352"/>
        <end position="361"/>
    </location>
</feature>
<feature type="helix" evidence="29">
    <location>
        <begin position="363"/>
        <end position="365"/>
    </location>
</feature>
<feature type="helix" evidence="29">
    <location>
        <begin position="368"/>
        <end position="371"/>
    </location>
</feature>
<feature type="strand" evidence="29">
    <location>
        <begin position="373"/>
        <end position="382"/>
    </location>
</feature>
<feature type="strand" evidence="29">
    <location>
        <begin position="388"/>
        <end position="399"/>
    </location>
</feature>
<feature type="helix" evidence="29">
    <location>
        <begin position="403"/>
        <end position="416"/>
    </location>
</feature>
<feature type="strand" evidence="30">
    <location>
        <begin position="532"/>
        <end position="538"/>
    </location>
</feature>
<feature type="helix" evidence="30">
    <location>
        <begin position="539"/>
        <end position="554"/>
    </location>
</feature>
<feature type="strand" evidence="30">
    <location>
        <begin position="559"/>
        <end position="561"/>
    </location>
</feature>
<feature type="helix" evidence="30">
    <location>
        <begin position="563"/>
        <end position="566"/>
    </location>
</feature>
<feature type="turn" evidence="30">
    <location>
        <begin position="571"/>
        <end position="573"/>
    </location>
</feature>
<feature type="helix" evidence="30">
    <location>
        <begin position="576"/>
        <end position="581"/>
    </location>
</feature>
<feature type="turn" evidence="30">
    <location>
        <begin position="585"/>
        <end position="587"/>
    </location>
</feature>
<feature type="helix" evidence="30">
    <location>
        <begin position="588"/>
        <end position="594"/>
    </location>
</feature>
<feature type="helix" evidence="30">
    <location>
        <begin position="601"/>
        <end position="608"/>
    </location>
</feature>
<feature type="helix" evidence="30">
    <location>
        <begin position="612"/>
        <end position="616"/>
    </location>
</feature>
<feature type="helix" evidence="30">
    <location>
        <begin position="620"/>
        <end position="622"/>
    </location>
</feature>
<feature type="helix" evidence="30">
    <location>
        <begin position="623"/>
        <end position="641"/>
    </location>
</feature>
<keyword id="KW-0002">3D-structure</keyword>
<keyword id="KW-0010">Activator</keyword>
<keyword id="KW-0025">Alternative splicing</keyword>
<keyword id="KW-0053">Apoptosis</keyword>
<keyword id="KW-0238">DNA-binding</keyword>
<keyword id="KW-0479">Metal-binding</keyword>
<keyword id="KW-0539">Nucleus</keyword>
<keyword id="KW-1185">Reference proteome</keyword>
<keyword id="KW-0804">Transcription</keyword>
<keyword id="KW-0805">Transcription regulation</keyword>
<keyword id="KW-0043">Tumor suppressor</keyword>
<keyword id="KW-0862">Zinc</keyword>
<gene>
    <name evidence="27" type="primary">cep-1</name>
    <name evidence="27" type="ORF">F52B5.5</name>
</gene>
<accession>Q20646</accession>
<accession>Q564Z1</accession>
<accession>Q95V13</accession>
<organism>
    <name type="scientific">Caenorhabditis elegans</name>
    <dbReference type="NCBI Taxonomy" id="6239"/>
    <lineage>
        <taxon>Eukaryota</taxon>
        <taxon>Metazoa</taxon>
        <taxon>Ecdysozoa</taxon>
        <taxon>Nematoda</taxon>
        <taxon>Chromadorea</taxon>
        <taxon>Rhabditida</taxon>
        <taxon>Rhabditina</taxon>
        <taxon>Rhabditomorpha</taxon>
        <taxon>Rhabditoidea</taxon>
        <taxon>Rhabditidae</taxon>
        <taxon>Peloderinae</taxon>
        <taxon>Caenorhabditis</taxon>
    </lineage>
</organism>
<sequence length="644" mass="74569">MEPDDSQLSDILKDARIPDSQDIGVNLTQNLSFDTVQKMIDGVFTPIFSQGTEDSLEKDILKTPGISTIYNGILGNGEETKKRTPKISDAFEPDLNTSGDVFDSDKSEDGLMNDESYLSNTTLSQVVLDSQKYEYLRVRTEEEQQLVIEKRARERFIRKSMKIAEETALSYENDGSRELSETMTQKVTQMDFTETNVPFDGNDESSNLAVRVQSDMNLNEDCEKWMEIDVLKQKVAKSSDMAFAISSEHEKYLWTKMGCLVPIQVKWKLDKRHFNSNLSLRIRFVKYDKKENVEYAIRNPRSDVMKCRSHTEREQHFPFDSFFYIRNSEHEFSYSAEKGSTFTLIMYPGAVQANFDIIFMCQEKCLDLDDRRKTMCLAVFLDDENGNEILHAYIKQVRIVAYPRRDWKNFCEREDAKQKDFRFPELPAYKKASLESINIKQEVNLENMFNVTNTTAQMEPSTSYSSPSNSNNRKRFLNECDSPNNDYTMMHRTPPVTGYASRLHGCVPPIETEHENCQSPSMKRSRCTNYSFRTLTLSTAEYTKVVEFLAREAKVPRYTWVPTQVVSHILPTEGLERFLTAIKAGHDSVLFNANGIYTMGDMIREFEKHNDIFERIGIDSSKLSKYYEAFLSFYRIQEAMKLPK</sequence>
<dbReference type="EMBL" id="AF440800">
    <property type="protein sequence ID" value="AAL28139.1"/>
    <property type="molecule type" value="mRNA"/>
</dbReference>
<dbReference type="EMBL" id="BX284601">
    <property type="protein sequence ID" value="CAA99857.2"/>
    <property type="molecule type" value="Genomic_DNA"/>
</dbReference>
<dbReference type="EMBL" id="BX284601">
    <property type="protein sequence ID" value="CAI79201.1"/>
    <property type="molecule type" value="Genomic_DNA"/>
</dbReference>
<dbReference type="PIR" id="T22495">
    <property type="entry name" value="T22495"/>
</dbReference>
<dbReference type="RefSeq" id="NP_001021478.1">
    <molecule id="Q20646-1"/>
    <property type="nucleotide sequence ID" value="NM_001026307.8"/>
</dbReference>
<dbReference type="RefSeq" id="NP_001021479.1">
    <property type="nucleotide sequence ID" value="NM_001026308.4"/>
</dbReference>
<dbReference type="RefSeq" id="NP_001379445.1">
    <molecule id="Q20646-2"/>
    <property type="nucleotide sequence ID" value="NM_001392668.1"/>
</dbReference>
<dbReference type="PDB" id="1T4W">
    <property type="method" value="X-ray"/>
    <property type="resolution" value="2.10 A"/>
    <property type="chains" value="A=223-418"/>
</dbReference>
<dbReference type="PDB" id="2RP5">
    <property type="method" value="NMR"/>
    <property type="chains" value="A/B=514-644"/>
</dbReference>
<dbReference type="PDBsum" id="1T4W"/>
<dbReference type="PDBsum" id="2RP5"/>
<dbReference type="SMR" id="Q20646"/>
<dbReference type="BioGRID" id="38050">
    <property type="interactions" value="6"/>
</dbReference>
<dbReference type="ComplexPortal" id="CPX-1131">
    <property type="entry name" value="Prmt-5-cep-1-cbp-1 complex"/>
</dbReference>
<dbReference type="FunCoup" id="Q20646">
    <property type="interactions" value="764"/>
</dbReference>
<dbReference type="IntAct" id="Q20646">
    <property type="interactions" value="1"/>
</dbReference>
<dbReference type="MINT" id="Q20646"/>
<dbReference type="STRING" id="6239.F52B5.5a.2"/>
<dbReference type="PaxDb" id="6239-F52B5.5a.2"/>
<dbReference type="PeptideAtlas" id="Q20646"/>
<dbReference type="EnsemblMetazoa" id="F52B5.5a.1">
    <molecule id="Q20646-1"/>
    <property type="protein sequence ID" value="F52B5.5a.1"/>
    <property type="gene ID" value="WBGene00000467"/>
</dbReference>
<dbReference type="EnsemblMetazoa" id="F52B5.5b.1">
    <molecule id="Q20646-2"/>
    <property type="protein sequence ID" value="F52B5.5b.1"/>
    <property type="gene ID" value="WBGene00000467"/>
</dbReference>
<dbReference type="EnsemblMetazoa" id="F52B5.5b.2">
    <molecule id="Q20646-2"/>
    <property type="protein sequence ID" value="F52B5.5b.2"/>
    <property type="gene ID" value="WBGene00000467"/>
</dbReference>
<dbReference type="EnsemblMetazoa" id="F52B5.5b.3">
    <molecule id="Q20646-2"/>
    <property type="protein sequence ID" value="F52B5.5b.3"/>
    <property type="gene ID" value="WBGene00000467"/>
</dbReference>
<dbReference type="EnsemblMetazoa" id="F52B5.5b.4">
    <molecule id="Q20646-2"/>
    <property type="protein sequence ID" value="F52B5.5b.4"/>
    <property type="gene ID" value="WBGene00000467"/>
</dbReference>
<dbReference type="GeneID" id="172616"/>
<dbReference type="KEGG" id="cel:CELE_F52B5.5"/>
<dbReference type="UCSC" id="F52B5.5a.1">
    <property type="organism name" value="c. elegans"/>
</dbReference>
<dbReference type="AGR" id="WB:WBGene00000467"/>
<dbReference type="CTD" id="172616"/>
<dbReference type="WormBase" id="F52B5.5a">
    <molecule id="Q20646-1"/>
    <property type="protein sequence ID" value="CE29805"/>
    <property type="gene ID" value="WBGene00000467"/>
    <property type="gene designation" value="cep-1"/>
</dbReference>
<dbReference type="WormBase" id="F52B5.5b">
    <molecule id="Q20646-2"/>
    <property type="protein sequence ID" value="CE38369"/>
    <property type="gene ID" value="WBGene00000467"/>
    <property type="gene designation" value="cep-1"/>
</dbReference>
<dbReference type="eggNOG" id="ENOG502TH76">
    <property type="taxonomic scope" value="Eukaryota"/>
</dbReference>
<dbReference type="HOGENOM" id="CLU_425295_0_0_1"/>
<dbReference type="InParanoid" id="Q20646"/>
<dbReference type="OMA" id="VAYPRRD"/>
<dbReference type="OrthoDB" id="5819222at2759"/>
<dbReference type="SignaLink" id="Q20646"/>
<dbReference type="EvolutionaryTrace" id="Q20646"/>
<dbReference type="PRO" id="PR:Q20646"/>
<dbReference type="Proteomes" id="UP000001940">
    <property type="component" value="Chromosome I"/>
</dbReference>
<dbReference type="Bgee" id="WBGene00000467">
    <property type="expression patterns" value="Expressed in germ line (C elegans) and 4 other cell types or tissues"/>
</dbReference>
<dbReference type="GO" id="GO:0043073">
    <property type="term" value="C:germ cell nucleus"/>
    <property type="evidence" value="ECO:0000314"/>
    <property type="project" value="WormBase"/>
</dbReference>
<dbReference type="GO" id="GO:0005730">
    <property type="term" value="C:nucleolus"/>
    <property type="evidence" value="ECO:0000314"/>
    <property type="project" value="WormBase"/>
</dbReference>
<dbReference type="GO" id="GO:0005654">
    <property type="term" value="C:nucleoplasm"/>
    <property type="evidence" value="ECO:0000314"/>
    <property type="project" value="WormBase"/>
</dbReference>
<dbReference type="GO" id="GO:0005634">
    <property type="term" value="C:nucleus"/>
    <property type="evidence" value="ECO:0000314"/>
    <property type="project" value="UniProtKB"/>
</dbReference>
<dbReference type="GO" id="GO:0017053">
    <property type="term" value="C:transcription repressor complex"/>
    <property type="evidence" value="ECO:0000353"/>
    <property type="project" value="ComplexPortal"/>
</dbReference>
<dbReference type="GO" id="GO:0003677">
    <property type="term" value="F:DNA binding"/>
    <property type="evidence" value="ECO:0000314"/>
    <property type="project" value="WormBase"/>
</dbReference>
<dbReference type="GO" id="GO:0003700">
    <property type="term" value="F:DNA-binding transcription factor activity"/>
    <property type="evidence" value="ECO:0000314"/>
    <property type="project" value="UniProtKB"/>
</dbReference>
<dbReference type="GO" id="GO:0042803">
    <property type="term" value="F:protein homodimerization activity"/>
    <property type="evidence" value="ECO:0000314"/>
    <property type="project" value="UniProtKB"/>
</dbReference>
<dbReference type="GO" id="GO:0043565">
    <property type="term" value="F:sequence-specific DNA binding"/>
    <property type="evidence" value="ECO:0000314"/>
    <property type="project" value="UniProtKB"/>
</dbReference>
<dbReference type="GO" id="GO:0008270">
    <property type="term" value="F:zinc ion binding"/>
    <property type="evidence" value="ECO:0000314"/>
    <property type="project" value="UniProtKB"/>
</dbReference>
<dbReference type="GO" id="GO:0008340">
    <property type="term" value="P:determination of adult lifespan"/>
    <property type="evidence" value="ECO:0000315"/>
    <property type="project" value="UniProtKB"/>
</dbReference>
<dbReference type="GO" id="GO:0072332">
    <property type="term" value="P:intrinsic apoptotic signaling pathway by p53 class mediator"/>
    <property type="evidence" value="ECO:0000316"/>
    <property type="project" value="WormBase"/>
</dbReference>
<dbReference type="GO" id="GO:0008630">
    <property type="term" value="P:intrinsic apoptotic signaling pathway in response to DNA damage"/>
    <property type="evidence" value="ECO:0000315"/>
    <property type="project" value="ComplexPortal"/>
</dbReference>
<dbReference type="GO" id="GO:0042771">
    <property type="term" value="P:intrinsic apoptotic signaling pathway in response to DNA damage by p53 class mediator"/>
    <property type="evidence" value="ECO:0000314"/>
    <property type="project" value="UniProtKB"/>
</dbReference>
<dbReference type="GO" id="GO:0045132">
    <property type="term" value="P:meiotic chromosome segregation"/>
    <property type="evidence" value="ECO:0000315"/>
    <property type="project" value="UniProtKB"/>
</dbReference>
<dbReference type="GO" id="GO:0045944">
    <property type="term" value="P:positive regulation of transcription by RNA polymerase II"/>
    <property type="evidence" value="ECO:0000314"/>
    <property type="project" value="WormBase"/>
</dbReference>
<dbReference type="GO" id="GO:0006355">
    <property type="term" value="P:regulation of DNA-templated transcription"/>
    <property type="evidence" value="ECO:0000314"/>
    <property type="project" value="UniProtKB"/>
</dbReference>
<dbReference type="GO" id="GO:0001666">
    <property type="term" value="P:response to hypoxia"/>
    <property type="evidence" value="ECO:0000315"/>
    <property type="project" value="UniProtKB"/>
</dbReference>
<dbReference type="GO" id="GO:0006979">
    <property type="term" value="P:response to oxidative stress"/>
    <property type="evidence" value="ECO:0000315"/>
    <property type="project" value="UniProtKB"/>
</dbReference>
<dbReference type="GO" id="GO:0042594">
    <property type="term" value="P:response to starvation"/>
    <property type="evidence" value="ECO:0000315"/>
    <property type="project" value="WormBase"/>
</dbReference>
<dbReference type="GO" id="GO:0042770">
    <property type="term" value="P:signal transduction in response to DNA damage"/>
    <property type="evidence" value="ECO:0000314"/>
    <property type="project" value="UniProtKB"/>
</dbReference>
<dbReference type="FunFam" id="1.10.150.830:FF:000001">
    <property type="entry name" value="Transcription factor cep-1"/>
    <property type="match status" value="1"/>
</dbReference>
<dbReference type="FunFam" id="2.60.40.720:FF:000009">
    <property type="entry name" value="Transcription factor cep-1"/>
    <property type="match status" value="1"/>
</dbReference>
<dbReference type="Gene3D" id="1.10.150.830">
    <property type="match status" value="1"/>
</dbReference>
<dbReference type="Gene3D" id="2.60.40.720">
    <property type="match status" value="1"/>
</dbReference>
<dbReference type="InterPro" id="IPR054106">
    <property type="entry name" value="CEP-1_C"/>
</dbReference>
<dbReference type="InterPro" id="IPR008967">
    <property type="entry name" value="p53-like_TF_DNA-bd_sf"/>
</dbReference>
<dbReference type="InterPro" id="IPR012346">
    <property type="entry name" value="p53/RUNT-type_TF_DNA-bd_sf"/>
</dbReference>
<dbReference type="InterPro" id="IPR015367">
    <property type="entry name" value="Trans_fact_CEP1_DNA-bd"/>
</dbReference>
<dbReference type="Pfam" id="PF09287">
    <property type="entry name" value="CEP1-DNA_bind"/>
    <property type="match status" value="1"/>
</dbReference>
<dbReference type="Pfam" id="PF21907">
    <property type="entry name" value="SAM_CEP-1_C"/>
    <property type="match status" value="1"/>
</dbReference>
<dbReference type="SUPFAM" id="SSF49417">
    <property type="entry name" value="p53-like transcription factors"/>
    <property type="match status" value="1"/>
</dbReference>
<reference evidence="24 25" key="1">
    <citation type="journal article" date="2001" name="Curr. Biol.">
        <title>The C. elegans homolog of the p53 tumor suppressor is required for DNA damage-induced apoptosis.</title>
        <authorList>
            <person name="Schumacher B."/>
            <person name="Hofmann K."/>
            <person name="Boulton S.J."/>
            <person name="Gartner A."/>
        </authorList>
    </citation>
    <scope>NUCLEOTIDE SEQUENCE [MRNA] (ISOFORM A)</scope>
    <scope>FUNCTION</scope>
    <scope>DISRUPTION PHENOTYPE</scope>
</reference>
<reference evidence="24 26" key="2">
    <citation type="journal article" date="1998" name="Science">
        <title>Genome sequence of the nematode C. elegans: a platform for investigating biology.</title>
        <authorList>
            <consortium name="The C. elegans sequencing consortium"/>
        </authorList>
    </citation>
    <scope>NUCLEOTIDE SEQUENCE [LARGE SCALE GENOMIC DNA]</scope>
    <source>
        <strain>Bristol N2</strain>
    </source>
</reference>
<reference evidence="24" key="3">
    <citation type="journal article" date="2001" name="Science">
        <title>Caenorhabditis elegans p53: role in apoptosis, meiosis, and stress resistance.</title>
        <authorList>
            <person name="Derry W.B."/>
            <person name="Putzke A.P."/>
            <person name="Rothman J.H."/>
        </authorList>
    </citation>
    <scope>FUNCTION</scope>
    <scope>SUBCELLULAR LOCATION</scope>
    <scope>TISSUE SPECIFICITY</scope>
    <scope>DEVELOPMENTAL STAGE</scope>
    <scope>DISRUPTION PHENOTYPE</scope>
</reference>
<reference evidence="24" key="4">
    <citation type="journal article" date="2002" name="Curr. Biol.">
        <title>Caenorhabditis elegans HUS-1 is a DNA damage checkpoint protein required for genome stability and EGL-1-mediated apoptosis.</title>
        <authorList>
            <person name="Hofmann E.R."/>
            <person name="Milstein S."/>
            <person name="Boulton S.J."/>
            <person name="Ye M."/>
            <person name="Hofmann J.J."/>
            <person name="Stergiou L."/>
            <person name="Gartner A."/>
            <person name="Vidal M."/>
            <person name="Hengartner M.O."/>
        </authorList>
    </citation>
    <scope>FUNCTION</scope>
</reference>
<reference key="5">
    <citation type="journal article" date="2003" name="Nat. Genet.">
        <title>iASPP oncoprotein is a key inhibitor of p53 conserved from worm to human.</title>
        <authorList>
            <person name="Bergamaschi D."/>
            <person name="Samuels Y."/>
            <person name="O'Neil N.J."/>
            <person name="Trigiante G."/>
            <person name="Crook T."/>
            <person name="Hsieh J.-K."/>
            <person name="O'Connor D.J."/>
            <person name="Zhong S."/>
            <person name="Campargue I."/>
            <person name="Tomlinson M.L."/>
            <person name="Kuwabara P.E."/>
            <person name="Lu X."/>
        </authorList>
    </citation>
    <scope>FUNCTION</scope>
    <scope>INTERACTION WITH APE-1</scope>
    <scope>DISRUPTION PHENOTYPE</scope>
</reference>
<reference evidence="24" key="6">
    <citation type="journal article" date="2004" name="Nat. Genet.">
        <title>Caenorhabditis elegans ABL-1 antagonizes p53-mediated germline apoptosis after ionizing irradiation.</title>
        <authorList>
            <person name="Deng X."/>
            <person name="Hofmann E.R."/>
            <person name="Villanueva A."/>
            <person name="Hobert O."/>
            <person name="Capodieci P."/>
            <person name="Veach D.R."/>
            <person name="Yin X."/>
            <person name="Campodonico L."/>
            <person name="Glekas A."/>
            <person name="Cordon-Cardo C."/>
            <person name="Clarkson B."/>
            <person name="Bornmann W.G."/>
            <person name="Fuks Z."/>
            <person name="Hengartner M.O."/>
            <person name="Kolesnick R."/>
        </authorList>
    </citation>
    <scope>FUNCTION</scope>
    <scope>DISRUPTION PHENOTYPE</scope>
</reference>
<reference evidence="24" key="7">
    <citation type="journal article" date="2005" name="Cell">
        <title>Translational repression of C. elegans p53 by GLD-1 regulates DNA damage-induced apoptosis.</title>
        <authorList>
            <person name="Schumacher B."/>
            <person name="Hanazawa M."/>
            <person name="Lee M.-H."/>
            <person name="Nayak S."/>
            <person name="Volkmann K."/>
            <person name="Hofmann E.R."/>
            <person name="Hengartner M.O."/>
            <person name="Schedl T."/>
            <person name="Gartner A."/>
        </authorList>
    </citation>
    <scope>FUNCTION</scope>
    <scope>DEVELOPMENTAL STAGE</scope>
</reference>
<reference evidence="24" key="8">
    <citation type="journal article" date="2005" name="Cell Death Differ.">
        <title>C. elegans ced-13 can promote apoptosis and is induced in response to DNA damage.</title>
        <authorList>
            <person name="Schumacher B."/>
            <person name="Schertel C."/>
            <person name="Wittenburg N."/>
            <person name="Tuck S."/>
            <person name="Mitani S."/>
            <person name="Gartner A."/>
            <person name="Conradt B."/>
            <person name="Shaham S."/>
        </authorList>
    </citation>
    <scope>FUNCTION</scope>
</reference>
<reference evidence="24" key="9">
    <citation type="journal article" date="2005" name="EMBO J.">
        <title>Distinct modes of ATR activation after replication stress and DNA double-strand breaks in Caenorhabditis elegans.</title>
        <authorList>
            <person name="Garcia-Muse T."/>
            <person name="Boulton S.J."/>
        </authorList>
    </citation>
    <scope>FUNCTION</scope>
</reference>
<reference evidence="24" key="10">
    <citation type="journal article" date="2007" name="Curr. Biol.">
        <title>AKT-1 regulates DNA-damage-induced germline apoptosis in C. elegans.</title>
        <authorList>
            <person name="Quevedo C."/>
            <person name="Kaplan D.R."/>
            <person name="Derry W.B."/>
        </authorList>
    </citation>
    <scope>FUNCTION</scope>
    <scope>INDUCTION</scope>
    <scope>PHOSPHORYLATION</scope>
</reference>
<reference evidence="24" key="11">
    <citation type="journal article" date="2007" name="Cell Death Differ.">
        <title>Regulation of developmental rate and germ cell proliferation in Caenorhabditis elegans by the p53 gene network.</title>
        <authorList>
            <person name="Derry W.B."/>
            <person name="Bierings R."/>
            <person name="van Iersel M."/>
            <person name="Satkunendran T."/>
            <person name="Reinke V."/>
            <person name="Rothman J.H."/>
        </authorList>
    </citation>
    <scope>FUNCTION</scope>
</reference>
<reference evidence="24" key="12">
    <citation type="journal article" date="2007" name="Cell Death Differ.">
        <title>The nucleotide excision repair pathway is required for UV-C-induced apoptosis in Caenorhabditis elegans.</title>
        <authorList>
            <person name="Stergiou L."/>
            <person name="Doukoumetzidis K."/>
            <person name="Sendoel A."/>
            <person name="Hengartner M.O."/>
        </authorList>
    </citation>
    <scope>FUNCTION</scope>
</reference>
<reference evidence="24" key="13">
    <citation type="journal article" date="2007" name="J. Gerontol.">
        <title>Reduced expression of the Caenorhabditis elegans p53 ortholog cep-1 results in increased longevity.</title>
        <authorList>
            <person name="Arum O."/>
            <person name="Johnson T.E."/>
        </authorList>
    </citation>
    <scope>FUNCTION</scope>
    <scope>DISRUPTION PHENOTYPE</scope>
</reference>
<reference evidence="24" key="14">
    <citation type="journal article" date="2008" name="BMC Genomics">
        <title>Transcriptional profiling in C. elegans suggests DNA damage dependent apoptosis as an ancient function of the p53 family.</title>
        <authorList>
            <person name="Greiss S."/>
            <person name="Schumacher B."/>
            <person name="Grandien K."/>
            <person name="Rothblatt J."/>
            <person name="Gartner A."/>
        </authorList>
    </citation>
    <scope>FUNCTION</scope>
</reference>
<reference evidence="24" key="15">
    <citation type="journal article" date="2008" name="PLoS ONE">
        <title>A novel role for the SMG-1 kinase in lifespan and oxidative stress resistance in Caenorhabditis elegans.</title>
        <authorList>
            <person name="Masse I."/>
            <person name="Molin L."/>
            <person name="Mouchiroud L."/>
            <person name="Vanhems P."/>
            <person name="Palladino F."/>
            <person name="Billaud M."/>
            <person name="Solari F."/>
        </authorList>
    </citation>
    <scope>FUNCTION</scope>
</reference>
<reference evidence="24" key="16">
    <citation type="journal article" date="2009" name="Genetics">
        <title>The Caenorhabditis elegans ing-3 gene regulates ionizing radiation-induced germ-cell apoptosis in a p53-associated pathway.</title>
        <authorList>
            <person name="Luo J."/>
            <person name="Shah S."/>
            <person name="Riabowol K."/>
            <person name="Mains P.E."/>
        </authorList>
    </citation>
    <scope>FUNCTION</scope>
    <scope>DISRUPTION PHENOTYPE</scope>
</reference>
<reference key="17">
    <citation type="journal article" date="2009" name="PLoS Genet.">
        <title>Caenorhabditis elegans protein arginine methyltransferase PRMT-5 negatively regulates DNA damage-induced apoptosis.</title>
        <authorList>
            <person name="Yang M."/>
            <person name="Sun J."/>
            <person name="Sun X."/>
            <person name="Shen Q."/>
            <person name="Gao Z."/>
            <person name="Yang C."/>
        </authorList>
    </citation>
    <scope>FUNCTION</scope>
    <scope>INTERACTION WITH PRMT-5 AND CBP-1</scope>
    <scope>DISRUPTION PHENOTYPE</scope>
</reference>
<reference evidence="24" key="18">
    <citation type="journal article" date="2011" name="PLoS Genet.">
        <title>Regulation of Caenorhabditis elegans p53/CEP-1-dependent germ cell apoptosis by Ras/MAPK signaling.</title>
        <authorList>
            <person name="Rutkowski R."/>
            <person name="Dickinson R."/>
            <person name="Stewart G."/>
            <person name="Craig A."/>
            <person name="Schimpl M."/>
            <person name="Keyse S.M."/>
            <person name="Gartner A."/>
        </authorList>
    </citation>
    <scope>FUNCTION</scope>
    <scope>DEVELOPMENTAL STAGE</scope>
</reference>
<reference key="19">
    <citation type="journal article" date="2016" name="J. Cell Sci.">
        <title>Loss of PGL-1 and PGL-3, members of a family of constitutive germ-granule components, promotes germline apoptosis in C. elegans.</title>
        <authorList>
            <person name="Min H."/>
            <person name="Shim Y.H."/>
            <person name="Kawasaki I."/>
        </authorList>
    </citation>
    <scope>FUNCTION</scope>
    <scope>DISRUPTION PHENOTYPE</scope>
</reference>
<reference key="20">
    <citation type="journal article" date="2017" name="Aging Cell">
        <title>Transcription factors CEP-1/p53 and CEH-23 collaborate with AAK-2/AMPK to modulate longevity in Caenorhabditis elegans.</title>
        <authorList>
            <person name="Chang H.W."/>
            <person name="Pisano S."/>
            <person name="Chaturbedi A."/>
            <person name="Chen J."/>
            <person name="Gordon S."/>
            <person name="Baruah A."/>
            <person name="Lee S.S."/>
        </authorList>
    </citation>
    <scope>FUNCTION</scope>
</reference>
<reference key="21">
    <citation type="journal article" date="2004" name="Structure">
        <title>Structural differences in the DNA binding domains of human p53 and its C. elegans ortholog Cep-1.</title>
        <authorList>
            <person name="Huyen Y."/>
            <person name="Jeffrey P.D."/>
            <person name="Derry W.B."/>
            <person name="Rothman J.H."/>
            <person name="Pavletich N.P."/>
            <person name="Stavridi E.S."/>
            <person name="Halazonetis T.D."/>
        </authorList>
    </citation>
    <scope>X-RAY CRYSTALLOGRAPHY (2.1 ANGSTROMS)</scope>
    <scope>FUNCTION</scope>
    <scope>DNA-BINDING</scope>
</reference>
<reference key="22">
    <citation type="journal article" date="2007" name="EMBO J.">
        <title>Structural evolution of C-terminal domains in the p53 family.</title>
        <authorList>
            <person name="Ou H.D."/>
            <person name="Loehr F."/>
            <person name="Vogel V."/>
            <person name="Maentele W."/>
            <person name="Doetsch V."/>
        </authorList>
    </citation>
    <scope>STRUCTURE BY NMR OF 514-644</scope>
    <scope>DIMERIZATION</scope>
    <scope>MUTAGENESIS OF LYS-544; ARG-551 AND GLU-552</scope>
    <scope>ZINC-BINDING SITES</scope>
</reference>
<proteinExistence type="evidence at protein level"/>
<protein>
    <recommendedName>
        <fullName evidence="24">Transcription factor cep-1</fullName>
    </recommendedName>
    <alternativeName>
        <fullName evidence="27">C.elegans p53-like protein 1</fullName>
    </alternativeName>
</protein>